<protein>
    <recommendedName>
        <fullName evidence="1">GTPase Obg</fullName>
        <ecNumber evidence="1">3.6.5.-</ecNumber>
    </recommendedName>
    <alternativeName>
        <fullName evidence="1">GTP-binding protein Obg</fullName>
    </alternativeName>
</protein>
<dbReference type="EC" id="3.6.5.-" evidence="1"/>
<dbReference type="EMBL" id="CP000387">
    <property type="protein sequence ID" value="ABN44238.1"/>
    <property type="molecule type" value="Genomic_DNA"/>
</dbReference>
<dbReference type="RefSeq" id="WP_011836728.1">
    <property type="nucleotide sequence ID" value="NC_009009.1"/>
</dbReference>
<dbReference type="RefSeq" id="YP_001034788.1">
    <property type="nucleotide sequence ID" value="NC_009009.1"/>
</dbReference>
<dbReference type="SMR" id="A3CM33"/>
<dbReference type="STRING" id="388919.SSA_0807"/>
<dbReference type="KEGG" id="ssa:SSA_0807"/>
<dbReference type="PATRIC" id="fig|388919.9.peg.773"/>
<dbReference type="eggNOG" id="COG0536">
    <property type="taxonomic scope" value="Bacteria"/>
</dbReference>
<dbReference type="HOGENOM" id="CLU_011747_2_1_9"/>
<dbReference type="OrthoDB" id="9807318at2"/>
<dbReference type="Proteomes" id="UP000002148">
    <property type="component" value="Chromosome"/>
</dbReference>
<dbReference type="GO" id="GO:0005737">
    <property type="term" value="C:cytoplasm"/>
    <property type="evidence" value="ECO:0007669"/>
    <property type="project" value="UniProtKB-SubCell"/>
</dbReference>
<dbReference type="GO" id="GO:0005525">
    <property type="term" value="F:GTP binding"/>
    <property type="evidence" value="ECO:0007669"/>
    <property type="project" value="UniProtKB-UniRule"/>
</dbReference>
<dbReference type="GO" id="GO:0003924">
    <property type="term" value="F:GTPase activity"/>
    <property type="evidence" value="ECO:0007669"/>
    <property type="project" value="UniProtKB-UniRule"/>
</dbReference>
<dbReference type="GO" id="GO:0000287">
    <property type="term" value="F:magnesium ion binding"/>
    <property type="evidence" value="ECO:0007669"/>
    <property type="project" value="InterPro"/>
</dbReference>
<dbReference type="GO" id="GO:0042254">
    <property type="term" value="P:ribosome biogenesis"/>
    <property type="evidence" value="ECO:0007669"/>
    <property type="project" value="UniProtKB-UniRule"/>
</dbReference>
<dbReference type="CDD" id="cd01898">
    <property type="entry name" value="Obg"/>
    <property type="match status" value="1"/>
</dbReference>
<dbReference type="FunFam" id="2.70.210.12:FF:000001">
    <property type="entry name" value="GTPase Obg"/>
    <property type="match status" value="1"/>
</dbReference>
<dbReference type="FunFam" id="3.40.50.300:FF:000515">
    <property type="entry name" value="GTPase Obg"/>
    <property type="match status" value="1"/>
</dbReference>
<dbReference type="Gene3D" id="3.30.300.350">
    <property type="entry name" value="GTP-binding protein OBG, C-terminal domain"/>
    <property type="match status" value="1"/>
</dbReference>
<dbReference type="Gene3D" id="2.70.210.12">
    <property type="entry name" value="GTP1/OBG domain"/>
    <property type="match status" value="1"/>
</dbReference>
<dbReference type="Gene3D" id="3.40.50.300">
    <property type="entry name" value="P-loop containing nucleotide triphosphate hydrolases"/>
    <property type="match status" value="1"/>
</dbReference>
<dbReference type="HAMAP" id="MF_01454">
    <property type="entry name" value="GTPase_Obg"/>
    <property type="match status" value="1"/>
</dbReference>
<dbReference type="InterPro" id="IPR031167">
    <property type="entry name" value="G_OBG"/>
</dbReference>
<dbReference type="InterPro" id="IPR006073">
    <property type="entry name" value="GTP-bd"/>
</dbReference>
<dbReference type="InterPro" id="IPR014100">
    <property type="entry name" value="GTP-bd_Obg/CgtA"/>
</dbReference>
<dbReference type="InterPro" id="IPR036346">
    <property type="entry name" value="GTP-bd_prot_GTP1/OBG_C_sf"/>
</dbReference>
<dbReference type="InterPro" id="IPR006074">
    <property type="entry name" value="GTP1-OBG_CS"/>
</dbReference>
<dbReference type="InterPro" id="IPR006169">
    <property type="entry name" value="GTP1_OBG_dom"/>
</dbReference>
<dbReference type="InterPro" id="IPR036726">
    <property type="entry name" value="GTP1_OBG_dom_sf"/>
</dbReference>
<dbReference type="InterPro" id="IPR045086">
    <property type="entry name" value="OBG_GTPase"/>
</dbReference>
<dbReference type="InterPro" id="IPR015349">
    <property type="entry name" value="OCT_dom"/>
</dbReference>
<dbReference type="InterPro" id="IPR027417">
    <property type="entry name" value="P-loop_NTPase"/>
</dbReference>
<dbReference type="InterPro" id="IPR005225">
    <property type="entry name" value="Small_GTP-bd"/>
</dbReference>
<dbReference type="NCBIfam" id="TIGR02729">
    <property type="entry name" value="Obg_CgtA"/>
    <property type="match status" value="1"/>
</dbReference>
<dbReference type="NCBIfam" id="TIGR03595">
    <property type="entry name" value="Obg_CgtA_exten"/>
    <property type="match status" value="1"/>
</dbReference>
<dbReference type="NCBIfam" id="NF008954">
    <property type="entry name" value="PRK12296.1"/>
    <property type="match status" value="1"/>
</dbReference>
<dbReference type="NCBIfam" id="NF008955">
    <property type="entry name" value="PRK12297.1"/>
    <property type="match status" value="1"/>
</dbReference>
<dbReference type="NCBIfam" id="NF008956">
    <property type="entry name" value="PRK12299.1"/>
    <property type="match status" value="1"/>
</dbReference>
<dbReference type="NCBIfam" id="TIGR00231">
    <property type="entry name" value="small_GTP"/>
    <property type="match status" value="1"/>
</dbReference>
<dbReference type="PANTHER" id="PTHR11702">
    <property type="entry name" value="DEVELOPMENTALLY REGULATED GTP-BINDING PROTEIN-RELATED"/>
    <property type="match status" value="1"/>
</dbReference>
<dbReference type="PANTHER" id="PTHR11702:SF31">
    <property type="entry name" value="MITOCHONDRIAL RIBOSOME-ASSOCIATED GTPASE 2"/>
    <property type="match status" value="1"/>
</dbReference>
<dbReference type="Pfam" id="PF09269">
    <property type="entry name" value="DUF1967"/>
    <property type="match status" value="1"/>
</dbReference>
<dbReference type="Pfam" id="PF01018">
    <property type="entry name" value="GTP1_OBG"/>
    <property type="match status" value="1"/>
</dbReference>
<dbReference type="Pfam" id="PF01926">
    <property type="entry name" value="MMR_HSR1"/>
    <property type="match status" value="1"/>
</dbReference>
<dbReference type="PIRSF" id="PIRSF002401">
    <property type="entry name" value="GTP_bd_Obg/CgtA"/>
    <property type="match status" value="1"/>
</dbReference>
<dbReference type="PRINTS" id="PR00326">
    <property type="entry name" value="GTP1OBG"/>
</dbReference>
<dbReference type="SUPFAM" id="SSF102741">
    <property type="entry name" value="Obg GTP-binding protein C-terminal domain"/>
    <property type="match status" value="1"/>
</dbReference>
<dbReference type="SUPFAM" id="SSF82051">
    <property type="entry name" value="Obg GTP-binding protein N-terminal domain"/>
    <property type="match status" value="1"/>
</dbReference>
<dbReference type="SUPFAM" id="SSF52540">
    <property type="entry name" value="P-loop containing nucleoside triphosphate hydrolases"/>
    <property type="match status" value="1"/>
</dbReference>
<dbReference type="PROSITE" id="PS51710">
    <property type="entry name" value="G_OBG"/>
    <property type="match status" value="1"/>
</dbReference>
<dbReference type="PROSITE" id="PS00905">
    <property type="entry name" value="GTP1_OBG"/>
    <property type="match status" value="1"/>
</dbReference>
<dbReference type="PROSITE" id="PS51883">
    <property type="entry name" value="OBG"/>
    <property type="match status" value="1"/>
</dbReference>
<dbReference type="PROSITE" id="PS51881">
    <property type="entry name" value="OCT"/>
    <property type="match status" value="1"/>
</dbReference>
<comment type="function">
    <text evidence="1">An essential GTPase which binds GTP, GDP and possibly (p)ppGpp with moderate affinity, with high nucleotide exchange rates and a fairly low GTP hydrolysis rate. Plays a role in control of the cell cycle, stress response, ribosome biogenesis and in those bacteria that undergo differentiation, in morphogenesis control.</text>
</comment>
<comment type="cofactor">
    <cofactor evidence="1">
        <name>Mg(2+)</name>
        <dbReference type="ChEBI" id="CHEBI:18420"/>
    </cofactor>
</comment>
<comment type="subunit">
    <text evidence="1">Monomer.</text>
</comment>
<comment type="subcellular location">
    <subcellularLocation>
        <location evidence="1">Cytoplasm</location>
    </subcellularLocation>
</comment>
<comment type="similarity">
    <text evidence="1">Belongs to the TRAFAC class OBG-HflX-like GTPase superfamily. OBG GTPase family.</text>
</comment>
<feature type="chain" id="PRO_0000386315" description="GTPase Obg">
    <location>
        <begin position="1"/>
        <end position="436"/>
    </location>
</feature>
<feature type="domain" description="Obg" evidence="3">
    <location>
        <begin position="2"/>
        <end position="160"/>
    </location>
</feature>
<feature type="domain" description="OBG-type G" evidence="1">
    <location>
        <begin position="161"/>
        <end position="338"/>
    </location>
</feature>
<feature type="domain" description="OCT" evidence="2">
    <location>
        <begin position="358"/>
        <end position="436"/>
    </location>
</feature>
<feature type="binding site" evidence="1">
    <location>
        <begin position="167"/>
        <end position="174"/>
    </location>
    <ligand>
        <name>GTP</name>
        <dbReference type="ChEBI" id="CHEBI:37565"/>
    </ligand>
</feature>
<feature type="binding site" evidence="1">
    <location>
        <position position="174"/>
    </location>
    <ligand>
        <name>Mg(2+)</name>
        <dbReference type="ChEBI" id="CHEBI:18420"/>
    </ligand>
</feature>
<feature type="binding site" evidence="1">
    <location>
        <begin position="192"/>
        <end position="196"/>
    </location>
    <ligand>
        <name>GTP</name>
        <dbReference type="ChEBI" id="CHEBI:37565"/>
    </ligand>
</feature>
<feature type="binding site" evidence="1">
    <location>
        <position position="194"/>
    </location>
    <ligand>
        <name>Mg(2+)</name>
        <dbReference type="ChEBI" id="CHEBI:18420"/>
    </ligand>
</feature>
<feature type="binding site" evidence="1">
    <location>
        <begin position="214"/>
        <end position="217"/>
    </location>
    <ligand>
        <name>GTP</name>
        <dbReference type="ChEBI" id="CHEBI:37565"/>
    </ligand>
</feature>
<feature type="binding site" evidence="1">
    <location>
        <begin position="284"/>
        <end position="287"/>
    </location>
    <ligand>
        <name>GTP</name>
        <dbReference type="ChEBI" id="CHEBI:37565"/>
    </ligand>
</feature>
<feature type="binding site" evidence="1">
    <location>
        <begin position="319"/>
        <end position="321"/>
    </location>
    <ligand>
        <name>GTP</name>
        <dbReference type="ChEBI" id="CHEBI:37565"/>
    </ligand>
</feature>
<gene>
    <name evidence="1" type="primary">obg</name>
    <name type="ordered locus">SSA_0807</name>
</gene>
<proteinExistence type="inferred from homology"/>
<name>OBG_STRSV</name>
<keyword id="KW-0963">Cytoplasm</keyword>
<keyword id="KW-0342">GTP-binding</keyword>
<keyword id="KW-0378">Hydrolase</keyword>
<keyword id="KW-0460">Magnesium</keyword>
<keyword id="KW-0479">Metal-binding</keyword>
<keyword id="KW-0547">Nucleotide-binding</keyword>
<keyword id="KW-1185">Reference proteome</keyword>
<organism>
    <name type="scientific">Streptococcus sanguinis (strain SK36)</name>
    <dbReference type="NCBI Taxonomy" id="388919"/>
    <lineage>
        <taxon>Bacteria</taxon>
        <taxon>Bacillati</taxon>
        <taxon>Bacillota</taxon>
        <taxon>Bacilli</taxon>
        <taxon>Lactobacillales</taxon>
        <taxon>Streptococcaceae</taxon>
        <taxon>Streptococcus</taxon>
    </lineage>
</organism>
<sequence>MSMFLDTAKIQVKAGNGGDGMVAFRREKYVPNGGPWGGDGGRGGNVVFVVDEGLRTLMDFRYNRHFKAQSGEKGMTKGMHGRGAEDLIVRVPQGTTVRDAETGKVLTDLVENGQEFIVARGGRGGRGNIRFATPKNPAPEISENGEPGQERELLLELKVLADVGLVGFPSVGKSTLLSVITAAKPKIGAYHFTTIVPNLGMVRTHSGESFAVADLPGLIEGASQGVGLGTQFLRHIERTRVILHVIDMSASEGRDPYEDYLAINKELESYNLRLMERPQIIVANKMDMPDSAENLKIFKEKLAANYDEFAELPQIFPISSLTKQGLATLLDATAELLDKTPEFLLYDESEMEEEAYYGFDEEAPAFEISRDDDATWVLSGDKLEKLFSMTNFDRDEAVMKFARQLRGMGVDEALRDRGAKDGDLVRIGKFEFEFVD</sequence>
<evidence type="ECO:0000255" key="1">
    <source>
        <dbReference type="HAMAP-Rule" id="MF_01454"/>
    </source>
</evidence>
<evidence type="ECO:0000255" key="2">
    <source>
        <dbReference type="PROSITE-ProRule" id="PRU01229"/>
    </source>
</evidence>
<evidence type="ECO:0000255" key="3">
    <source>
        <dbReference type="PROSITE-ProRule" id="PRU01231"/>
    </source>
</evidence>
<reference key="1">
    <citation type="journal article" date="2007" name="J. Bacteriol.">
        <title>Genome of the opportunistic pathogen Streptococcus sanguinis.</title>
        <authorList>
            <person name="Xu P."/>
            <person name="Alves J.M."/>
            <person name="Kitten T."/>
            <person name="Brown A."/>
            <person name="Chen Z."/>
            <person name="Ozaki L.S."/>
            <person name="Manque P."/>
            <person name="Ge X."/>
            <person name="Serrano M.G."/>
            <person name="Puiu D."/>
            <person name="Hendricks S."/>
            <person name="Wang Y."/>
            <person name="Chaplin M.D."/>
            <person name="Akan D."/>
            <person name="Paik S."/>
            <person name="Peterson D.L."/>
            <person name="Macrina F.L."/>
            <person name="Buck G.A."/>
        </authorList>
    </citation>
    <scope>NUCLEOTIDE SEQUENCE [LARGE SCALE GENOMIC DNA]</scope>
    <source>
        <strain>SK36</strain>
    </source>
</reference>
<accession>A3CM33</accession>